<dbReference type="EMBL" id="BA000037">
    <property type="protein sequence ID" value="BAC93046.1"/>
    <property type="molecule type" value="Genomic_DNA"/>
</dbReference>
<dbReference type="RefSeq" id="WP_011078898.1">
    <property type="nucleotide sequence ID" value="NC_005139.1"/>
</dbReference>
<dbReference type="SMR" id="Q7MPT0"/>
<dbReference type="STRING" id="672.VV93_v1c02740"/>
<dbReference type="GeneID" id="93895128"/>
<dbReference type="KEGG" id="vvy:VV0282"/>
<dbReference type="eggNOG" id="COG1309">
    <property type="taxonomic scope" value="Bacteria"/>
</dbReference>
<dbReference type="HOGENOM" id="CLU_069356_5_0_6"/>
<dbReference type="Proteomes" id="UP000002675">
    <property type="component" value="Chromosome I"/>
</dbReference>
<dbReference type="GO" id="GO:0043590">
    <property type="term" value="C:bacterial nucleoid"/>
    <property type="evidence" value="ECO:0007669"/>
    <property type="project" value="UniProtKB-UniRule"/>
</dbReference>
<dbReference type="GO" id="GO:0005737">
    <property type="term" value="C:cytoplasm"/>
    <property type="evidence" value="ECO:0007669"/>
    <property type="project" value="UniProtKB-UniRule"/>
</dbReference>
<dbReference type="GO" id="GO:0003700">
    <property type="term" value="F:DNA-binding transcription factor activity"/>
    <property type="evidence" value="ECO:0007669"/>
    <property type="project" value="TreeGrafter"/>
</dbReference>
<dbReference type="GO" id="GO:0000976">
    <property type="term" value="F:transcription cis-regulatory region binding"/>
    <property type="evidence" value="ECO:0007669"/>
    <property type="project" value="TreeGrafter"/>
</dbReference>
<dbReference type="GO" id="GO:0051301">
    <property type="term" value="P:cell division"/>
    <property type="evidence" value="ECO:0007669"/>
    <property type="project" value="UniProtKB-KW"/>
</dbReference>
<dbReference type="GO" id="GO:0010974">
    <property type="term" value="P:negative regulation of division septum assembly"/>
    <property type="evidence" value="ECO:0007669"/>
    <property type="project" value="InterPro"/>
</dbReference>
<dbReference type="Gene3D" id="1.10.357.10">
    <property type="entry name" value="Tetracycline Repressor, domain 2"/>
    <property type="match status" value="1"/>
</dbReference>
<dbReference type="HAMAP" id="MF_01839">
    <property type="entry name" value="NO_factor_SlmA"/>
    <property type="match status" value="1"/>
</dbReference>
<dbReference type="InterPro" id="IPR009057">
    <property type="entry name" value="Homeodomain-like_sf"/>
</dbReference>
<dbReference type="InterPro" id="IPR050109">
    <property type="entry name" value="HTH-type_TetR-like_transc_reg"/>
</dbReference>
<dbReference type="InterPro" id="IPR001647">
    <property type="entry name" value="HTH_TetR"/>
</dbReference>
<dbReference type="InterPro" id="IPR023769">
    <property type="entry name" value="NO_SlmA"/>
</dbReference>
<dbReference type="InterPro" id="IPR054580">
    <property type="entry name" value="SlmA-like_C"/>
</dbReference>
<dbReference type="InterPro" id="IPR036271">
    <property type="entry name" value="Tet_transcr_reg_TetR-rel_C_sf"/>
</dbReference>
<dbReference type="NCBIfam" id="NF007015">
    <property type="entry name" value="PRK09480.1"/>
    <property type="match status" value="1"/>
</dbReference>
<dbReference type="PANTHER" id="PTHR30055">
    <property type="entry name" value="HTH-TYPE TRANSCRIPTIONAL REGULATOR RUTR"/>
    <property type="match status" value="1"/>
</dbReference>
<dbReference type="PANTHER" id="PTHR30055:SF183">
    <property type="entry name" value="NUCLEOID OCCLUSION FACTOR SLMA"/>
    <property type="match status" value="1"/>
</dbReference>
<dbReference type="Pfam" id="PF22276">
    <property type="entry name" value="SlmA-like_C"/>
    <property type="match status" value="1"/>
</dbReference>
<dbReference type="Pfam" id="PF00440">
    <property type="entry name" value="TetR_N"/>
    <property type="match status" value="1"/>
</dbReference>
<dbReference type="SUPFAM" id="SSF46689">
    <property type="entry name" value="Homeodomain-like"/>
    <property type="match status" value="1"/>
</dbReference>
<dbReference type="SUPFAM" id="SSF48498">
    <property type="entry name" value="Tetracyclin repressor-like, C-terminal domain"/>
    <property type="match status" value="1"/>
</dbReference>
<dbReference type="PROSITE" id="PS50977">
    <property type="entry name" value="HTH_TETR_2"/>
    <property type="match status" value="1"/>
</dbReference>
<feature type="chain" id="PRO_0000198987" description="Nucleoid occlusion factor SlmA">
    <location>
        <begin position="1"/>
        <end position="196"/>
    </location>
</feature>
<feature type="domain" description="HTH tetR-type" evidence="1">
    <location>
        <begin position="7"/>
        <end position="68"/>
    </location>
</feature>
<feature type="DNA-binding region" description="H-T-H motif" evidence="1">
    <location>
        <begin position="31"/>
        <end position="50"/>
    </location>
</feature>
<feature type="coiled-coil region" evidence="1">
    <location>
        <begin position="65"/>
        <end position="142"/>
    </location>
</feature>
<reference key="1">
    <citation type="journal article" date="2003" name="Genome Res.">
        <title>Comparative genome analysis of Vibrio vulnificus, a marine pathogen.</title>
        <authorList>
            <person name="Chen C.-Y."/>
            <person name="Wu K.-M."/>
            <person name="Chang Y.-C."/>
            <person name="Chang C.-H."/>
            <person name="Tsai H.-C."/>
            <person name="Liao T.-L."/>
            <person name="Liu Y.-M."/>
            <person name="Chen H.-J."/>
            <person name="Shen A.B.-T."/>
            <person name="Li J.-C."/>
            <person name="Su T.-L."/>
            <person name="Shao C.-P."/>
            <person name="Lee C.-T."/>
            <person name="Hor L.-I."/>
            <person name="Tsai S.-F."/>
        </authorList>
    </citation>
    <scope>NUCLEOTIDE SEQUENCE [LARGE SCALE GENOMIC DNA]</scope>
    <source>
        <strain>YJ016</strain>
    </source>
</reference>
<organism>
    <name type="scientific">Vibrio vulnificus (strain YJ016)</name>
    <dbReference type="NCBI Taxonomy" id="196600"/>
    <lineage>
        <taxon>Bacteria</taxon>
        <taxon>Pseudomonadati</taxon>
        <taxon>Pseudomonadota</taxon>
        <taxon>Gammaproteobacteria</taxon>
        <taxon>Vibrionales</taxon>
        <taxon>Vibrionaceae</taxon>
        <taxon>Vibrio</taxon>
    </lineage>
</organism>
<gene>
    <name evidence="1" type="primary">slmA</name>
    <name type="ordered locus">VV0282</name>
</gene>
<evidence type="ECO:0000255" key="1">
    <source>
        <dbReference type="HAMAP-Rule" id="MF_01839"/>
    </source>
</evidence>
<comment type="function">
    <text evidence="1">Required for nucleoid occlusion (NO) phenomenon, which prevents Z-ring formation and cell division over the nucleoid. Acts as a DNA-associated cell division inhibitor that binds simultaneously chromosomal DNA and FtsZ, and disrupts the assembly of FtsZ polymers. SlmA-DNA-binding sequences (SBS) are dispersed on non-Ter regions of the chromosome, preventing FtsZ polymerization at these regions.</text>
</comment>
<comment type="subunit">
    <text evidence="1">Homodimer. Interacts with FtsZ.</text>
</comment>
<comment type="subcellular location">
    <subcellularLocation>
        <location evidence="1">Cytoplasm</location>
        <location evidence="1">Nucleoid</location>
    </subcellularLocation>
</comment>
<comment type="similarity">
    <text evidence="1">Belongs to the nucleoid occlusion factor SlmA family.</text>
</comment>
<proteinExistence type="inferred from homology"/>
<keyword id="KW-0131">Cell cycle</keyword>
<keyword id="KW-0132">Cell division</keyword>
<keyword id="KW-0175">Coiled coil</keyword>
<keyword id="KW-0963">Cytoplasm</keyword>
<keyword id="KW-0238">DNA-binding</keyword>
<accession>Q7MPT0</accession>
<name>SLMA_VIBVY</name>
<sequence length="196" mass="22776">MAGSKKSNRREEILQALAHMLESAEGASRITTAKLAQQVGVSEAALYRHFPSKARMFEGLIEFIEEALMSRINRILDEEKDTLERIRLVLQLLLAFAERNPGLTRIMSGHALMFENERLRDRINQLFERIETQLRQILRERKLREGKSFPVEEKILAAQLLGQVEGSLNRFVRSDFKYQPTENFEEYWALLSAQIK</sequence>
<protein>
    <recommendedName>
        <fullName evidence="1">Nucleoid occlusion factor SlmA</fullName>
    </recommendedName>
</protein>